<accession>Q3MG30</accession>
<feature type="chain" id="PRO_1000065137" description="N-acetyl-gamma-glutamyl-phosphate reductase">
    <location>
        <begin position="1"/>
        <end position="322"/>
    </location>
</feature>
<feature type="active site" evidence="1">
    <location>
        <position position="117"/>
    </location>
</feature>
<gene>
    <name evidence="1" type="primary">argC</name>
    <name type="ordered locus">Ava_0430</name>
</gene>
<protein>
    <recommendedName>
        <fullName evidence="1">N-acetyl-gamma-glutamyl-phosphate reductase</fullName>
        <shortName evidence="1">AGPR</shortName>
        <ecNumber evidence="1">1.2.1.38</ecNumber>
    </recommendedName>
    <alternativeName>
        <fullName evidence="1">N-acetyl-glutamate semialdehyde dehydrogenase</fullName>
        <shortName evidence="1">NAGSA dehydrogenase</shortName>
    </alternativeName>
</protein>
<keyword id="KW-0028">Amino-acid biosynthesis</keyword>
<keyword id="KW-0055">Arginine biosynthesis</keyword>
<keyword id="KW-0963">Cytoplasm</keyword>
<keyword id="KW-0521">NADP</keyword>
<keyword id="KW-0560">Oxidoreductase</keyword>
<dbReference type="EC" id="1.2.1.38" evidence="1"/>
<dbReference type="EMBL" id="CP000117">
    <property type="protein sequence ID" value="ABA20056.1"/>
    <property type="molecule type" value="Genomic_DNA"/>
</dbReference>
<dbReference type="SMR" id="Q3MG30"/>
<dbReference type="STRING" id="240292.Ava_0430"/>
<dbReference type="KEGG" id="ava:Ava_0430"/>
<dbReference type="eggNOG" id="COG0002">
    <property type="taxonomic scope" value="Bacteria"/>
</dbReference>
<dbReference type="HOGENOM" id="CLU_077118_0_0_3"/>
<dbReference type="UniPathway" id="UPA00068">
    <property type="reaction ID" value="UER00108"/>
</dbReference>
<dbReference type="Proteomes" id="UP000002533">
    <property type="component" value="Chromosome"/>
</dbReference>
<dbReference type="GO" id="GO:0005737">
    <property type="term" value="C:cytoplasm"/>
    <property type="evidence" value="ECO:0007669"/>
    <property type="project" value="UniProtKB-SubCell"/>
</dbReference>
<dbReference type="GO" id="GO:0003942">
    <property type="term" value="F:N-acetyl-gamma-glutamyl-phosphate reductase activity"/>
    <property type="evidence" value="ECO:0007669"/>
    <property type="project" value="UniProtKB-UniRule"/>
</dbReference>
<dbReference type="GO" id="GO:0051287">
    <property type="term" value="F:NAD binding"/>
    <property type="evidence" value="ECO:0007669"/>
    <property type="project" value="InterPro"/>
</dbReference>
<dbReference type="GO" id="GO:0006526">
    <property type="term" value="P:L-arginine biosynthetic process"/>
    <property type="evidence" value="ECO:0007669"/>
    <property type="project" value="UniProtKB-UniRule"/>
</dbReference>
<dbReference type="CDD" id="cd23935">
    <property type="entry name" value="AGPR_2_C"/>
    <property type="match status" value="1"/>
</dbReference>
<dbReference type="CDD" id="cd17896">
    <property type="entry name" value="AGPR_2_N"/>
    <property type="match status" value="1"/>
</dbReference>
<dbReference type="Gene3D" id="3.30.360.10">
    <property type="entry name" value="Dihydrodipicolinate Reductase, domain 2"/>
    <property type="match status" value="1"/>
</dbReference>
<dbReference type="Gene3D" id="3.40.50.720">
    <property type="entry name" value="NAD(P)-binding Rossmann-like Domain"/>
    <property type="match status" value="1"/>
</dbReference>
<dbReference type="HAMAP" id="MF_01110">
    <property type="entry name" value="ArgC_type2"/>
    <property type="match status" value="1"/>
</dbReference>
<dbReference type="InterPro" id="IPR023013">
    <property type="entry name" value="AGPR_AS"/>
</dbReference>
<dbReference type="InterPro" id="IPR010136">
    <property type="entry name" value="AGPR_type-2"/>
</dbReference>
<dbReference type="InterPro" id="IPR036291">
    <property type="entry name" value="NAD(P)-bd_dom_sf"/>
</dbReference>
<dbReference type="InterPro" id="IPR050085">
    <property type="entry name" value="NAGSA_dehydrogenase"/>
</dbReference>
<dbReference type="InterPro" id="IPR000534">
    <property type="entry name" value="Semialdehyde_DH_NAD-bd"/>
</dbReference>
<dbReference type="NCBIfam" id="TIGR01851">
    <property type="entry name" value="argC_other"/>
    <property type="match status" value="1"/>
</dbReference>
<dbReference type="PANTHER" id="PTHR32338:SF10">
    <property type="entry name" value="N-ACETYL-GAMMA-GLUTAMYL-PHOSPHATE REDUCTASE, CHLOROPLASTIC-RELATED"/>
    <property type="match status" value="1"/>
</dbReference>
<dbReference type="PANTHER" id="PTHR32338">
    <property type="entry name" value="N-ACETYL-GAMMA-GLUTAMYL-PHOSPHATE REDUCTASE, CHLOROPLASTIC-RELATED-RELATED"/>
    <property type="match status" value="1"/>
</dbReference>
<dbReference type="Pfam" id="PF01118">
    <property type="entry name" value="Semialdhyde_dh"/>
    <property type="match status" value="1"/>
</dbReference>
<dbReference type="Pfam" id="PF22698">
    <property type="entry name" value="Semialdhyde_dhC_1"/>
    <property type="match status" value="1"/>
</dbReference>
<dbReference type="SMART" id="SM00859">
    <property type="entry name" value="Semialdhyde_dh"/>
    <property type="match status" value="1"/>
</dbReference>
<dbReference type="SUPFAM" id="SSF55347">
    <property type="entry name" value="Glyceraldehyde-3-phosphate dehydrogenase-like, C-terminal domain"/>
    <property type="match status" value="1"/>
</dbReference>
<dbReference type="SUPFAM" id="SSF51735">
    <property type="entry name" value="NAD(P)-binding Rossmann-fold domains"/>
    <property type="match status" value="1"/>
</dbReference>
<dbReference type="PROSITE" id="PS01224">
    <property type="entry name" value="ARGC"/>
    <property type="match status" value="1"/>
</dbReference>
<proteinExistence type="inferred from homology"/>
<name>ARGC_TRIV2</name>
<sequence length="322" mass="34832">MNKPKIFIDGEAGTTGLQIYSRLNERDDIELVSIAASKRKDADERAKLLNSVDVAILCLPDDAAREAVSLVHSSQVKILDASTAYRTAQGWVYGFPELNPGQREKIANAQFVSNPGCYPTGFLACVRPLIAQGILPSSFPITINAVSGYSGGGKSLIQKYDSFHEQQKGATSDYPFGIYGLQFGHKHVKEMHQHSGLASPPLFIPAVGDFEQGMLVQIPLPLWTLDNPPSGEEIHQAIAQYYQGEKFVQVASFKDPSLLRDGTFLDATAVNGTNIVQVFVFANDNTKEALLVARLDNLGKGASGAAVQNLNIMLGLPEELGL</sequence>
<reference key="1">
    <citation type="journal article" date="2014" name="Stand. Genomic Sci.">
        <title>Complete genome sequence of Anabaena variabilis ATCC 29413.</title>
        <authorList>
            <person name="Thiel T."/>
            <person name="Pratte B.S."/>
            <person name="Zhong J."/>
            <person name="Goodwin L."/>
            <person name="Copeland A."/>
            <person name="Lucas S."/>
            <person name="Han C."/>
            <person name="Pitluck S."/>
            <person name="Land M.L."/>
            <person name="Kyrpides N.C."/>
            <person name="Woyke T."/>
        </authorList>
    </citation>
    <scope>NUCLEOTIDE SEQUENCE [LARGE SCALE GENOMIC DNA]</scope>
    <source>
        <strain>ATCC 29413 / PCC 7937</strain>
    </source>
</reference>
<organism>
    <name type="scientific">Trichormus variabilis (strain ATCC 29413 / PCC 7937)</name>
    <name type="common">Anabaena variabilis</name>
    <dbReference type="NCBI Taxonomy" id="240292"/>
    <lineage>
        <taxon>Bacteria</taxon>
        <taxon>Bacillati</taxon>
        <taxon>Cyanobacteriota</taxon>
        <taxon>Cyanophyceae</taxon>
        <taxon>Nostocales</taxon>
        <taxon>Nostocaceae</taxon>
        <taxon>Trichormus</taxon>
    </lineage>
</organism>
<comment type="function">
    <text evidence="1">Catalyzes the NADPH-dependent reduction of N-acetyl-5-glutamyl phosphate to yield N-acetyl-L-glutamate 5-semialdehyde.</text>
</comment>
<comment type="catalytic activity">
    <reaction evidence="1">
        <text>N-acetyl-L-glutamate 5-semialdehyde + phosphate + NADP(+) = N-acetyl-L-glutamyl 5-phosphate + NADPH + H(+)</text>
        <dbReference type="Rhea" id="RHEA:21588"/>
        <dbReference type="ChEBI" id="CHEBI:15378"/>
        <dbReference type="ChEBI" id="CHEBI:29123"/>
        <dbReference type="ChEBI" id="CHEBI:43474"/>
        <dbReference type="ChEBI" id="CHEBI:57783"/>
        <dbReference type="ChEBI" id="CHEBI:57936"/>
        <dbReference type="ChEBI" id="CHEBI:58349"/>
        <dbReference type="EC" id="1.2.1.38"/>
    </reaction>
</comment>
<comment type="pathway">
    <text evidence="1">Amino-acid biosynthesis; L-arginine biosynthesis; N(2)-acetyl-L-ornithine from L-glutamate: step 3/4.</text>
</comment>
<comment type="subcellular location">
    <subcellularLocation>
        <location evidence="1">Cytoplasm</location>
    </subcellularLocation>
</comment>
<comment type="similarity">
    <text evidence="1">Belongs to the NAGSA dehydrogenase family. Type 2 subfamily.</text>
</comment>
<evidence type="ECO:0000255" key="1">
    <source>
        <dbReference type="HAMAP-Rule" id="MF_01110"/>
    </source>
</evidence>